<sequence>MAPKKKVAGLIKLQIVAGQANPAPPVGPALGQHGVNIMEFCKAYNAATENQRGNVIPVEITVYEDRSFTFTLKTPPAAKLLLKAAGVAKGSAEPHKTKVAKVTWDQVREIAETKKTDLNANDVDAAAKIIAGTARSMGITVE</sequence>
<accession>P9WHE5</accession>
<accession>L0T752</accession>
<accession>P66056</accession>
<accession>P96931</accession>
<comment type="function">
    <text evidence="1">Forms part of the ribosomal stalk which helps the ribosome interact with GTP-bound translation factors.</text>
</comment>
<comment type="subunit">
    <text evidence="1">Part of the ribosomal stalk of the 50S ribosomal subunit. Interacts with L10 and the large rRNA to form the base of the stalk. L10 forms an elongated spine to which L12 dimers bind in a sequential fashion forming a multimeric L10(L12)X complex.</text>
</comment>
<comment type="PTM">
    <text evidence="1">One or more lysine residues are methylated.</text>
</comment>
<comment type="similarity">
    <text evidence="1">Belongs to the universal ribosomal protein uL11 family.</text>
</comment>
<gene>
    <name evidence="1" type="primary">rplK</name>
    <name type="ordered locus">Rv0640</name>
    <name type="ORF">MTCY20H11.21</name>
</gene>
<proteinExistence type="evidence at protein level"/>
<name>RL11_MYCTU</name>
<dbReference type="EMBL" id="AL123456">
    <property type="protein sequence ID" value="CCP43383.1"/>
    <property type="molecule type" value="Genomic_DNA"/>
</dbReference>
<dbReference type="PIR" id="E70613">
    <property type="entry name" value="E70613"/>
</dbReference>
<dbReference type="RefSeq" id="NP_215154.1">
    <property type="nucleotide sequence ID" value="NC_000962.3"/>
</dbReference>
<dbReference type="RefSeq" id="WP_003403291.1">
    <property type="nucleotide sequence ID" value="NZ_NVQJ01000007.1"/>
</dbReference>
<dbReference type="SMR" id="P9WHE5"/>
<dbReference type="FunCoup" id="P9WHE5">
    <property type="interactions" value="517"/>
</dbReference>
<dbReference type="STRING" id="83332.Rv0640"/>
<dbReference type="PaxDb" id="83332-Rv0640"/>
<dbReference type="GeneID" id="45424600"/>
<dbReference type="GeneID" id="888045"/>
<dbReference type="KEGG" id="mtu:Rv0640"/>
<dbReference type="KEGG" id="mtv:RVBD_0640"/>
<dbReference type="TubercuList" id="Rv0640"/>
<dbReference type="eggNOG" id="COG0080">
    <property type="taxonomic scope" value="Bacteria"/>
</dbReference>
<dbReference type="InParanoid" id="P9WHE5"/>
<dbReference type="OrthoDB" id="9802408at2"/>
<dbReference type="PhylomeDB" id="P9WHE5"/>
<dbReference type="PRO" id="PR:P9WHE5"/>
<dbReference type="Proteomes" id="UP000001584">
    <property type="component" value="Chromosome"/>
</dbReference>
<dbReference type="GO" id="GO:0022625">
    <property type="term" value="C:cytosolic large ribosomal subunit"/>
    <property type="evidence" value="ECO:0000318"/>
    <property type="project" value="GO_Central"/>
</dbReference>
<dbReference type="GO" id="GO:0009274">
    <property type="term" value="C:peptidoglycan-based cell wall"/>
    <property type="evidence" value="ECO:0007005"/>
    <property type="project" value="MTBBASE"/>
</dbReference>
<dbReference type="GO" id="GO:0070180">
    <property type="term" value="F:large ribosomal subunit rRNA binding"/>
    <property type="evidence" value="ECO:0000318"/>
    <property type="project" value="GO_Central"/>
</dbReference>
<dbReference type="GO" id="GO:0003735">
    <property type="term" value="F:structural constituent of ribosome"/>
    <property type="evidence" value="ECO:0000318"/>
    <property type="project" value="GO_Central"/>
</dbReference>
<dbReference type="GO" id="GO:0006412">
    <property type="term" value="P:translation"/>
    <property type="evidence" value="ECO:0000318"/>
    <property type="project" value="GO_Central"/>
</dbReference>
<dbReference type="CDD" id="cd00349">
    <property type="entry name" value="Ribosomal_L11"/>
    <property type="match status" value="1"/>
</dbReference>
<dbReference type="FunFam" id="1.10.10.250:FF:000001">
    <property type="entry name" value="50S ribosomal protein L11"/>
    <property type="match status" value="1"/>
</dbReference>
<dbReference type="FunFam" id="3.30.1550.10:FF:000001">
    <property type="entry name" value="50S ribosomal protein L11"/>
    <property type="match status" value="1"/>
</dbReference>
<dbReference type="Gene3D" id="1.10.10.250">
    <property type="entry name" value="Ribosomal protein L11, C-terminal domain"/>
    <property type="match status" value="1"/>
</dbReference>
<dbReference type="Gene3D" id="3.30.1550.10">
    <property type="entry name" value="Ribosomal protein L11/L12, N-terminal domain"/>
    <property type="match status" value="1"/>
</dbReference>
<dbReference type="HAMAP" id="MF_00736">
    <property type="entry name" value="Ribosomal_uL11"/>
    <property type="match status" value="1"/>
</dbReference>
<dbReference type="InterPro" id="IPR000911">
    <property type="entry name" value="Ribosomal_uL11"/>
</dbReference>
<dbReference type="InterPro" id="IPR006519">
    <property type="entry name" value="Ribosomal_uL11_bac-typ"/>
</dbReference>
<dbReference type="InterPro" id="IPR020783">
    <property type="entry name" value="Ribosomal_uL11_C"/>
</dbReference>
<dbReference type="InterPro" id="IPR036769">
    <property type="entry name" value="Ribosomal_uL11_C_sf"/>
</dbReference>
<dbReference type="InterPro" id="IPR020785">
    <property type="entry name" value="Ribosomal_uL11_CS"/>
</dbReference>
<dbReference type="InterPro" id="IPR020784">
    <property type="entry name" value="Ribosomal_uL11_N"/>
</dbReference>
<dbReference type="InterPro" id="IPR036796">
    <property type="entry name" value="Ribosomal_uL11_N_sf"/>
</dbReference>
<dbReference type="NCBIfam" id="TIGR01632">
    <property type="entry name" value="L11_bact"/>
    <property type="match status" value="1"/>
</dbReference>
<dbReference type="PANTHER" id="PTHR11661">
    <property type="entry name" value="60S RIBOSOMAL PROTEIN L12"/>
    <property type="match status" value="1"/>
</dbReference>
<dbReference type="PANTHER" id="PTHR11661:SF1">
    <property type="entry name" value="LARGE RIBOSOMAL SUBUNIT PROTEIN UL11M"/>
    <property type="match status" value="1"/>
</dbReference>
<dbReference type="Pfam" id="PF00298">
    <property type="entry name" value="Ribosomal_L11"/>
    <property type="match status" value="1"/>
</dbReference>
<dbReference type="Pfam" id="PF03946">
    <property type="entry name" value="Ribosomal_L11_N"/>
    <property type="match status" value="1"/>
</dbReference>
<dbReference type="SMART" id="SM00649">
    <property type="entry name" value="RL11"/>
    <property type="match status" value="1"/>
</dbReference>
<dbReference type="SUPFAM" id="SSF54747">
    <property type="entry name" value="Ribosomal L11/L12e N-terminal domain"/>
    <property type="match status" value="1"/>
</dbReference>
<dbReference type="SUPFAM" id="SSF46906">
    <property type="entry name" value="Ribosomal protein L11, C-terminal domain"/>
    <property type="match status" value="1"/>
</dbReference>
<dbReference type="PROSITE" id="PS00359">
    <property type="entry name" value="RIBOSOMAL_L11"/>
    <property type="match status" value="1"/>
</dbReference>
<organism>
    <name type="scientific">Mycobacterium tuberculosis (strain ATCC 25618 / H37Rv)</name>
    <dbReference type="NCBI Taxonomy" id="83332"/>
    <lineage>
        <taxon>Bacteria</taxon>
        <taxon>Bacillati</taxon>
        <taxon>Actinomycetota</taxon>
        <taxon>Actinomycetes</taxon>
        <taxon>Mycobacteriales</taxon>
        <taxon>Mycobacteriaceae</taxon>
        <taxon>Mycobacterium</taxon>
        <taxon>Mycobacterium tuberculosis complex</taxon>
    </lineage>
</organism>
<keyword id="KW-1017">Isopeptide bond</keyword>
<keyword id="KW-0488">Methylation</keyword>
<keyword id="KW-1185">Reference proteome</keyword>
<keyword id="KW-0687">Ribonucleoprotein</keyword>
<keyword id="KW-0689">Ribosomal protein</keyword>
<keyword id="KW-0694">RNA-binding</keyword>
<keyword id="KW-0699">rRNA-binding</keyword>
<keyword id="KW-0832">Ubl conjugation</keyword>
<reference key="1">
    <citation type="journal article" date="1998" name="Nature">
        <title>Deciphering the biology of Mycobacterium tuberculosis from the complete genome sequence.</title>
        <authorList>
            <person name="Cole S.T."/>
            <person name="Brosch R."/>
            <person name="Parkhill J."/>
            <person name="Garnier T."/>
            <person name="Churcher C.M."/>
            <person name="Harris D.E."/>
            <person name="Gordon S.V."/>
            <person name="Eiglmeier K."/>
            <person name="Gas S."/>
            <person name="Barry C.E. III"/>
            <person name="Tekaia F."/>
            <person name="Badcock K."/>
            <person name="Basham D."/>
            <person name="Brown D."/>
            <person name="Chillingworth T."/>
            <person name="Connor R."/>
            <person name="Davies R.M."/>
            <person name="Devlin K."/>
            <person name="Feltwell T."/>
            <person name="Gentles S."/>
            <person name="Hamlin N."/>
            <person name="Holroyd S."/>
            <person name="Hornsby T."/>
            <person name="Jagels K."/>
            <person name="Krogh A."/>
            <person name="McLean J."/>
            <person name="Moule S."/>
            <person name="Murphy L.D."/>
            <person name="Oliver S."/>
            <person name="Osborne J."/>
            <person name="Quail M.A."/>
            <person name="Rajandream M.A."/>
            <person name="Rogers J."/>
            <person name="Rutter S."/>
            <person name="Seeger K."/>
            <person name="Skelton S."/>
            <person name="Squares S."/>
            <person name="Squares R."/>
            <person name="Sulston J.E."/>
            <person name="Taylor K."/>
            <person name="Whitehead S."/>
            <person name="Barrell B.G."/>
        </authorList>
    </citation>
    <scope>NUCLEOTIDE SEQUENCE [LARGE SCALE GENOMIC DNA]</scope>
    <source>
        <strain>ATCC 25618 / H37Rv</strain>
    </source>
</reference>
<reference key="2">
    <citation type="journal article" date="2010" name="PLoS ONE">
        <title>Prokaryotic ubiquitin-like protein (Pup) proteome of Mycobacterium tuberculosis.</title>
        <authorList>
            <person name="Festa R.A."/>
            <person name="McAllister F."/>
            <person name="Pearce M.J."/>
            <person name="Mintseris J."/>
            <person name="Burns K.E."/>
            <person name="Gygi S.P."/>
            <person name="Darwin K.H."/>
        </authorList>
    </citation>
    <scope>PUPYLATION AT LYS-101</scope>
    <scope>IDENTIFICATION BY MASS SPECTROMETRY</scope>
    <source>
        <strain>ATCC 25618 / H37Rv</strain>
    </source>
</reference>
<reference key="3">
    <citation type="journal article" date="2011" name="Mol. Cell. Proteomics">
        <title>Proteogenomic analysis of Mycobacterium tuberculosis by high resolution mass spectrometry.</title>
        <authorList>
            <person name="Kelkar D.S."/>
            <person name="Kumar D."/>
            <person name="Kumar P."/>
            <person name="Balakrishnan L."/>
            <person name="Muthusamy B."/>
            <person name="Yadav A.K."/>
            <person name="Shrivastava P."/>
            <person name="Marimuthu A."/>
            <person name="Anand S."/>
            <person name="Sundaram H."/>
            <person name="Kingsbury R."/>
            <person name="Harsha H.C."/>
            <person name="Nair B."/>
            <person name="Prasad T.S."/>
            <person name="Chauhan D.S."/>
            <person name="Katoch K."/>
            <person name="Katoch V.M."/>
            <person name="Kumar P."/>
            <person name="Chaerkady R."/>
            <person name="Ramachandran S."/>
            <person name="Dash D."/>
            <person name="Pandey A."/>
        </authorList>
    </citation>
    <scope>IDENTIFICATION BY MASS SPECTROMETRY [LARGE SCALE ANALYSIS]</scope>
    <source>
        <strain>ATCC 25618 / H37Rv</strain>
    </source>
</reference>
<protein>
    <recommendedName>
        <fullName evidence="1">Large ribosomal subunit protein uL11</fullName>
    </recommendedName>
    <alternativeName>
        <fullName evidence="3">50S ribosomal protein L11</fullName>
    </alternativeName>
</protein>
<evidence type="ECO:0000255" key="1">
    <source>
        <dbReference type="HAMAP-Rule" id="MF_00736"/>
    </source>
</evidence>
<evidence type="ECO:0000269" key="2">
    <source>
    </source>
</evidence>
<evidence type="ECO:0000305" key="3"/>
<feature type="chain" id="PRO_0000104325" description="Large ribosomal subunit protein uL11">
    <location>
        <begin position="1"/>
        <end position="142"/>
    </location>
</feature>
<feature type="cross-link" description="Isoglutamyl lysine isopeptide (Lys-Gln) (interchain with Q-Cter in protein Pup)" evidence="2">
    <location>
        <position position="101"/>
    </location>
</feature>